<sequence length="315" mass="34029">MSDSLRIIFAGTPDFAARHLDALLTSGHNVVGVFTQPDRPAGRGKKLMPSPVKVLAEEKGLPVFQPVSLRPQENQHLVADLHADVMVVVAYGLILPKAVLDMPRLGCINVHGSLLPRWRGAAPIQRSLWAGDAETGVTIMQMDVGLDTGDMLYKLACPITAEDTSGSLYNKLAELGPQGLITTLKQLADGTATPEAQNEALVTHAEKLSKEEARIDWSLSAAQLERCIRAFNPWPMSWLEIDGQPVKVWQASVIEDATQSLPGTILAATKQGIQVATGKGILNLLSLQPAGKKAMSAQDLLNSRREWFIPGNRLA</sequence>
<name>FMT_SALPB</name>
<protein>
    <recommendedName>
        <fullName evidence="1">Methionyl-tRNA formyltransferase</fullName>
        <ecNumber evidence="1">2.1.2.9</ecNumber>
    </recommendedName>
</protein>
<dbReference type="EC" id="2.1.2.9" evidence="1"/>
<dbReference type="EMBL" id="CP000886">
    <property type="protein sequence ID" value="ABX69565.1"/>
    <property type="molecule type" value="Genomic_DNA"/>
</dbReference>
<dbReference type="RefSeq" id="WP_001285165.1">
    <property type="nucleotide sequence ID" value="NC_010102.1"/>
</dbReference>
<dbReference type="SMR" id="A9N8B2"/>
<dbReference type="KEGG" id="spq:SPAB_04248"/>
<dbReference type="PATRIC" id="fig|1016998.12.peg.3995"/>
<dbReference type="HOGENOM" id="CLU_033347_1_2_6"/>
<dbReference type="BioCyc" id="SENT1016998:SPAB_RS17270-MONOMER"/>
<dbReference type="Proteomes" id="UP000008556">
    <property type="component" value="Chromosome"/>
</dbReference>
<dbReference type="GO" id="GO:0005829">
    <property type="term" value="C:cytosol"/>
    <property type="evidence" value="ECO:0007669"/>
    <property type="project" value="TreeGrafter"/>
</dbReference>
<dbReference type="GO" id="GO:0004479">
    <property type="term" value="F:methionyl-tRNA formyltransferase activity"/>
    <property type="evidence" value="ECO:0007669"/>
    <property type="project" value="UniProtKB-UniRule"/>
</dbReference>
<dbReference type="CDD" id="cd08646">
    <property type="entry name" value="FMT_core_Met-tRNA-FMT_N"/>
    <property type="match status" value="1"/>
</dbReference>
<dbReference type="CDD" id="cd08704">
    <property type="entry name" value="Met_tRNA_FMT_C"/>
    <property type="match status" value="1"/>
</dbReference>
<dbReference type="FunFam" id="3.10.25.10:FF:000001">
    <property type="entry name" value="Methionyl-tRNA formyltransferase"/>
    <property type="match status" value="1"/>
</dbReference>
<dbReference type="FunFam" id="3.40.50.170:FF:000003">
    <property type="entry name" value="Methionyl-tRNA formyltransferase"/>
    <property type="match status" value="1"/>
</dbReference>
<dbReference type="Gene3D" id="3.10.25.10">
    <property type="entry name" value="Formyl transferase, C-terminal domain"/>
    <property type="match status" value="1"/>
</dbReference>
<dbReference type="Gene3D" id="3.40.50.170">
    <property type="entry name" value="Formyl transferase, N-terminal domain"/>
    <property type="match status" value="1"/>
</dbReference>
<dbReference type="HAMAP" id="MF_00182">
    <property type="entry name" value="Formyl_trans"/>
    <property type="match status" value="1"/>
</dbReference>
<dbReference type="InterPro" id="IPR005794">
    <property type="entry name" value="Fmt"/>
</dbReference>
<dbReference type="InterPro" id="IPR005793">
    <property type="entry name" value="Formyl_trans_C"/>
</dbReference>
<dbReference type="InterPro" id="IPR037022">
    <property type="entry name" value="Formyl_trans_C_sf"/>
</dbReference>
<dbReference type="InterPro" id="IPR002376">
    <property type="entry name" value="Formyl_transf_N"/>
</dbReference>
<dbReference type="InterPro" id="IPR036477">
    <property type="entry name" value="Formyl_transf_N_sf"/>
</dbReference>
<dbReference type="InterPro" id="IPR011034">
    <property type="entry name" value="Formyl_transferase-like_C_sf"/>
</dbReference>
<dbReference type="InterPro" id="IPR001555">
    <property type="entry name" value="GART_AS"/>
</dbReference>
<dbReference type="InterPro" id="IPR044135">
    <property type="entry name" value="Met-tRNA-FMT_C"/>
</dbReference>
<dbReference type="InterPro" id="IPR041711">
    <property type="entry name" value="Met-tRNA-FMT_N"/>
</dbReference>
<dbReference type="NCBIfam" id="TIGR00460">
    <property type="entry name" value="fmt"/>
    <property type="match status" value="1"/>
</dbReference>
<dbReference type="PANTHER" id="PTHR11138">
    <property type="entry name" value="METHIONYL-TRNA FORMYLTRANSFERASE"/>
    <property type="match status" value="1"/>
</dbReference>
<dbReference type="PANTHER" id="PTHR11138:SF5">
    <property type="entry name" value="METHIONYL-TRNA FORMYLTRANSFERASE, MITOCHONDRIAL"/>
    <property type="match status" value="1"/>
</dbReference>
<dbReference type="Pfam" id="PF02911">
    <property type="entry name" value="Formyl_trans_C"/>
    <property type="match status" value="1"/>
</dbReference>
<dbReference type="Pfam" id="PF00551">
    <property type="entry name" value="Formyl_trans_N"/>
    <property type="match status" value="1"/>
</dbReference>
<dbReference type="SUPFAM" id="SSF50486">
    <property type="entry name" value="FMT C-terminal domain-like"/>
    <property type="match status" value="1"/>
</dbReference>
<dbReference type="SUPFAM" id="SSF53328">
    <property type="entry name" value="Formyltransferase"/>
    <property type="match status" value="1"/>
</dbReference>
<dbReference type="PROSITE" id="PS00373">
    <property type="entry name" value="GART"/>
    <property type="match status" value="1"/>
</dbReference>
<comment type="function">
    <text evidence="1">Attaches a formyl group to the free amino group of methionyl-tRNA(fMet). The formyl group appears to play a dual role in the initiator identity of N-formylmethionyl-tRNA by promoting its recognition by IF2 and preventing the misappropriation of this tRNA by the elongation apparatus.</text>
</comment>
<comment type="catalytic activity">
    <reaction evidence="1">
        <text>L-methionyl-tRNA(fMet) + (6R)-10-formyltetrahydrofolate = N-formyl-L-methionyl-tRNA(fMet) + (6S)-5,6,7,8-tetrahydrofolate + H(+)</text>
        <dbReference type="Rhea" id="RHEA:24380"/>
        <dbReference type="Rhea" id="RHEA-COMP:9952"/>
        <dbReference type="Rhea" id="RHEA-COMP:9953"/>
        <dbReference type="ChEBI" id="CHEBI:15378"/>
        <dbReference type="ChEBI" id="CHEBI:57453"/>
        <dbReference type="ChEBI" id="CHEBI:78530"/>
        <dbReference type="ChEBI" id="CHEBI:78844"/>
        <dbReference type="ChEBI" id="CHEBI:195366"/>
        <dbReference type="EC" id="2.1.2.9"/>
    </reaction>
</comment>
<comment type="similarity">
    <text evidence="1">Belongs to the Fmt family.</text>
</comment>
<reference key="1">
    <citation type="submission" date="2007-11" db="EMBL/GenBank/DDBJ databases">
        <authorList>
            <consortium name="The Salmonella enterica serovar Paratyphi B Genome Sequencing Project"/>
            <person name="McClelland M."/>
            <person name="Sanderson E.K."/>
            <person name="Porwollik S."/>
            <person name="Spieth J."/>
            <person name="Clifton W.S."/>
            <person name="Fulton R."/>
            <person name="Cordes M."/>
            <person name="Wollam A."/>
            <person name="Shah N."/>
            <person name="Pepin K."/>
            <person name="Bhonagiri V."/>
            <person name="Nash W."/>
            <person name="Johnson M."/>
            <person name="Thiruvilangam P."/>
            <person name="Wilson R."/>
        </authorList>
    </citation>
    <scope>NUCLEOTIDE SEQUENCE [LARGE SCALE GENOMIC DNA]</scope>
    <source>
        <strain>ATCC BAA-1250 / SPB7</strain>
    </source>
</reference>
<gene>
    <name evidence="1" type="primary">fmt</name>
    <name type="ordered locus">SPAB_04248</name>
</gene>
<organism>
    <name type="scientific">Salmonella paratyphi B (strain ATCC BAA-1250 / SPB7)</name>
    <dbReference type="NCBI Taxonomy" id="1016998"/>
    <lineage>
        <taxon>Bacteria</taxon>
        <taxon>Pseudomonadati</taxon>
        <taxon>Pseudomonadota</taxon>
        <taxon>Gammaproteobacteria</taxon>
        <taxon>Enterobacterales</taxon>
        <taxon>Enterobacteriaceae</taxon>
        <taxon>Salmonella</taxon>
    </lineage>
</organism>
<feature type="chain" id="PRO_1000077317" description="Methionyl-tRNA formyltransferase">
    <location>
        <begin position="1"/>
        <end position="315"/>
    </location>
</feature>
<feature type="binding site" evidence="1">
    <location>
        <begin position="113"/>
        <end position="116"/>
    </location>
    <ligand>
        <name>(6S)-5,6,7,8-tetrahydrofolate</name>
        <dbReference type="ChEBI" id="CHEBI:57453"/>
    </ligand>
</feature>
<accession>A9N8B2</accession>
<keyword id="KW-0648">Protein biosynthesis</keyword>
<keyword id="KW-0808">Transferase</keyword>
<proteinExistence type="inferred from homology"/>
<evidence type="ECO:0000255" key="1">
    <source>
        <dbReference type="HAMAP-Rule" id="MF_00182"/>
    </source>
</evidence>